<keyword id="KW-0378">Hydrolase</keyword>
<keyword id="KW-0460">Magnesium</keyword>
<keyword id="KW-0479">Metal-binding</keyword>
<keyword id="KW-1185">Reference proteome</keyword>
<comment type="catalytic activity">
    <reaction>
        <text>ADP-D-ribose + H2O = D-ribose 5-phosphate + AMP + 2 H(+)</text>
        <dbReference type="Rhea" id="RHEA:10412"/>
        <dbReference type="ChEBI" id="CHEBI:15377"/>
        <dbReference type="ChEBI" id="CHEBI:15378"/>
        <dbReference type="ChEBI" id="CHEBI:57967"/>
        <dbReference type="ChEBI" id="CHEBI:78346"/>
        <dbReference type="ChEBI" id="CHEBI:456215"/>
        <dbReference type="EC" id="3.6.1.13"/>
    </reaction>
</comment>
<comment type="cofactor">
    <cofactor evidence="1">
        <name>Mg(2+)</name>
        <dbReference type="ChEBI" id="CHEBI:18420"/>
    </cofactor>
    <text evidence="1">Binds 3 Mg(2+) ions per subunit.</text>
</comment>
<comment type="biophysicochemical properties">
    <phDependence>
        <text>Optimum pH is 4.85.</text>
    </phDependence>
    <temperatureDependence>
        <text>Thermostable.</text>
    </temperatureDependence>
</comment>
<comment type="similarity">
    <text evidence="4">Belongs to the Nudix hydrolase family. NudF subfamily.</text>
</comment>
<organism>
    <name type="scientific">Methanocaldococcus jannaschii (strain ATCC 43067 / DSM 2661 / JAL-1 / JCM 10045 / NBRC 100440)</name>
    <name type="common">Methanococcus jannaschii</name>
    <dbReference type="NCBI Taxonomy" id="243232"/>
    <lineage>
        <taxon>Archaea</taxon>
        <taxon>Methanobacteriati</taxon>
        <taxon>Methanobacteriota</taxon>
        <taxon>Methanomada group</taxon>
        <taxon>Methanococci</taxon>
        <taxon>Methanococcales</taxon>
        <taxon>Methanocaldococcaceae</taxon>
        <taxon>Methanocaldococcus</taxon>
    </lineage>
</organism>
<proteinExistence type="evidence at protein level"/>
<evidence type="ECO:0000250" key="1"/>
<evidence type="ECO:0000255" key="2"/>
<evidence type="ECO:0000255" key="3">
    <source>
        <dbReference type="PROSITE-ProRule" id="PRU00794"/>
    </source>
</evidence>
<evidence type="ECO:0000305" key="4"/>
<protein>
    <recommendedName>
        <fullName>ADP-ribose pyrophosphatase</fullName>
        <ecNumber>3.6.1.13</ecNumber>
    </recommendedName>
    <alternativeName>
        <fullName>ADP-ribose diphosphatase</fullName>
    </alternativeName>
    <alternativeName>
        <fullName>ADP-ribose phosphohydrolase</fullName>
    </alternativeName>
    <alternativeName>
        <fullName>Adenosine diphosphoribose pyrophosphatase</fullName>
        <shortName>ADPR-PPase</shortName>
    </alternativeName>
</protein>
<feature type="chain" id="PRO_0000057047" description="ADP-ribose pyrophosphatase">
    <location>
        <begin position="1"/>
        <end position="169"/>
    </location>
</feature>
<feature type="domain" description="Nudix hydrolase" evidence="3">
    <location>
        <begin position="38"/>
        <end position="168"/>
    </location>
</feature>
<feature type="short sequence motif" description="Nudix box" evidence="3">
    <location>
        <begin position="74"/>
        <end position="95"/>
    </location>
</feature>
<feature type="active site" description="Proton acceptor" evidence="2">
    <location>
        <position position="140"/>
    </location>
</feature>
<feature type="binding site" description="in other chain" evidence="1">
    <location>
        <begin position="12"/>
        <end position="13"/>
    </location>
    <ligand>
        <name>substrate</name>
        <note>ligand shared between dimeric partners</note>
    </ligand>
</feature>
<feature type="binding site" evidence="1">
    <location>
        <begin position="35"/>
        <end position="36"/>
    </location>
    <ligand>
        <name>substrate</name>
        <note>ligand shared between dimeric partners</note>
    </ligand>
</feature>
<feature type="binding site" evidence="1">
    <location>
        <position position="73"/>
    </location>
    <ligand>
        <name>Mg(2+)</name>
        <dbReference type="ChEBI" id="CHEBI:18420"/>
        <label>1</label>
    </ligand>
</feature>
<feature type="binding site" evidence="1">
    <location>
        <position position="89"/>
    </location>
    <ligand>
        <name>Mg(2+)</name>
        <dbReference type="ChEBI" id="CHEBI:18420"/>
        <label>2</label>
    </ligand>
</feature>
<feature type="binding site" evidence="1">
    <location>
        <position position="89"/>
    </location>
    <ligand>
        <name>Mg(2+)</name>
        <dbReference type="ChEBI" id="CHEBI:18420"/>
        <label>3</label>
    </ligand>
</feature>
<feature type="binding site" evidence="1">
    <location>
        <position position="93"/>
    </location>
    <ligand>
        <name>Mg(2+)</name>
        <dbReference type="ChEBI" id="CHEBI:18420"/>
        <label>1</label>
    </ligand>
</feature>
<feature type="binding site" evidence="1">
    <location>
        <position position="93"/>
    </location>
    <ligand>
        <name>Mg(2+)</name>
        <dbReference type="ChEBI" id="CHEBI:18420"/>
        <label>3</label>
    </ligand>
</feature>
<feature type="binding site" evidence="1">
    <location>
        <begin position="109"/>
        <end position="111"/>
    </location>
    <ligand>
        <name>substrate</name>
        <note>ligand shared between dimeric partners</note>
    </ligand>
</feature>
<feature type="binding site" evidence="1">
    <location>
        <position position="142"/>
    </location>
    <ligand>
        <name>Mg(2+)</name>
        <dbReference type="ChEBI" id="CHEBI:18420"/>
        <label>3</label>
    </ligand>
</feature>
<sequence>MAKKCFCISGKIFALNLFGKRYSKKIIKKRDLKKYRLYLHPAVAVDGIIEKDNKILLIKRKNNPFKGCFALPGGFVECGETVEEAVVREIKEETGLIPKVKSLLGVYSSPDRDPRGHVISIVFILDVIGGELKAGDDAKEAEFFDLNNLPKLAFDHEKIIKDYMRWKNG</sequence>
<reference key="1">
    <citation type="journal article" date="1996" name="Science">
        <title>Complete genome sequence of the methanogenic archaeon, Methanococcus jannaschii.</title>
        <authorList>
            <person name="Bult C.J."/>
            <person name="White O."/>
            <person name="Olsen G.J."/>
            <person name="Zhou L."/>
            <person name="Fleischmann R.D."/>
            <person name="Sutton G.G."/>
            <person name="Blake J.A."/>
            <person name="FitzGerald L.M."/>
            <person name="Clayton R.A."/>
            <person name="Gocayne J.D."/>
            <person name="Kerlavage A.R."/>
            <person name="Dougherty B.A."/>
            <person name="Tomb J.-F."/>
            <person name="Adams M.D."/>
            <person name="Reich C.I."/>
            <person name="Overbeek R."/>
            <person name="Kirkness E.F."/>
            <person name="Weinstock K.G."/>
            <person name="Merrick J.M."/>
            <person name="Glodek A."/>
            <person name="Scott J.L."/>
            <person name="Geoghagen N.S.M."/>
            <person name="Weidman J.F."/>
            <person name="Fuhrmann J.L."/>
            <person name="Nguyen D."/>
            <person name="Utterback T.R."/>
            <person name="Kelley J.M."/>
            <person name="Peterson J.D."/>
            <person name="Sadow P.W."/>
            <person name="Hanna M.C."/>
            <person name="Cotton M.D."/>
            <person name="Roberts K.M."/>
            <person name="Hurst M.A."/>
            <person name="Kaine B.P."/>
            <person name="Borodovsky M."/>
            <person name="Klenk H.-P."/>
            <person name="Fraser C.M."/>
            <person name="Smith H.O."/>
            <person name="Woese C.R."/>
            <person name="Venter J.C."/>
        </authorList>
    </citation>
    <scope>NUCLEOTIDE SEQUENCE [LARGE SCALE GENOMIC DNA]</scope>
    <source>
        <strain>ATCC 43067 / DSM 2661 / JAL-1 / JCM 10045 / NBRC 100440</strain>
    </source>
</reference>
<reference key="2">
    <citation type="journal article" date="1998" name="J. Biol. Chem.">
        <title>Identification and characterization of the Nudix hydrolase from the Archaeon, Methanococcus jannaschii, as a highly specific ADP-ribose pyrophosphatase.</title>
        <authorList>
            <person name="Sheikh S."/>
            <person name="O'Handley S.F."/>
            <person name="Dunn C.A."/>
            <person name="Bessman M.J."/>
        </authorList>
    </citation>
    <scope>CHARACTERIZATION</scope>
</reference>
<accession>Q58549</accession>
<name>ADPP_METJA</name>
<gene>
    <name type="primary">nudF</name>
    <name type="ordered locus">MJ1149</name>
</gene>
<dbReference type="EC" id="3.6.1.13"/>
<dbReference type="EMBL" id="L77117">
    <property type="protein sequence ID" value="AAB99149.1"/>
    <property type="molecule type" value="Genomic_DNA"/>
</dbReference>
<dbReference type="PIR" id="D64443">
    <property type="entry name" value="D64443"/>
</dbReference>
<dbReference type="RefSeq" id="WP_010870660.1">
    <property type="nucleotide sequence ID" value="NC_000909.1"/>
</dbReference>
<dbReference type="SMR" id="Q58549"/>
<dbReference type="FunCoup" id="Q58549">
    <property type="interactions" value="14"/>
</dbReference>
<dbReference type="STRING" id="243232.MJ_1149"/>
<dbReference type="PaxDb" id="243232-MJ_1149"/>
<dbReference type="EnsemblBacteria" id="AAB99149">
    <property type="protein sequence ID" value="AAB99149"/>
    <property type="gene ID" value="MJ_1149"/>
</dbReference>
<dbReference type="GeneID" id="1452045"/>
<dbReference type="KEGG" id="mja:MJ_1149"/>
<dbReference type="eggNOG" id="arCOG01075">
    <property type="taxonomic scope" value="Archaea"/>
</dbReference>
<dbReference type="HOGENOM" id="CLU_037162_20_3_2"/>
<dbReference type="InParanoid" id="Q58549"/>
<dbReference type="OrthoDB" id="40462at2157"/>
<dbReference type="PhylomeDB" id="Q58549"/>
<dbReference type="Proteomes" id="UP000000805">
    <property type="component" value="Chromosome"/>
</dbReference>
<dbReference type="GO" id="GO:0047631">
    <property type="term" value="F:ADP-ribose diphosphatase activity"/>
    <property type="evidence" value="ECO:0007669"/>
    <property type="project" value="UniProtKB-EC"/>
</dbReference>
<dbReference type="GO" id="GO:0046872">
    <property type="term" value="F:metal ion binding"/>
    <property type="evidence" value="ECO:0007669"/>
    <property type="project" value="UniProtKB-KW"/>
</dbReference>
<dbReference type="CDD" id="cd18873">
    <property type="entry name" value="NUDIX_NadM_like"/>
    <property type="match status" value="1"/>
</dbReference>
<dbReference type="Gene3D" id="3.90.79.10">
    <property type="entry name" value="Nucleoside Triphosphate Pyrophosphohydrolase"/>
    <property type="match status" value="1"/>
</dbReference>
<dbReference type="InterPro" id="IPR020476">
    <property type="entry name" value="Nudix_hydrolase"/>
</dbReference>
<dbReference type="InterPro" id="IPR015797">
    <property type="entry name" value="NUDIX_hydrolase-like_dom_sf"/>
</dbReference>
<dbReference type="InterPro" id="IPR020084">
    <property type="entry name" value="NUDIX_hydrolase_CS"/>
</dbReference>
<dbReference type="InterPro" id="IPR000086">
    <property type="entry name" value="NUDIX_hydrolase_dom"/>
</dbReference>
<dbReference type="PANTHER" id="PTHR43736">
    <property type="entry name" value="ADP-RIBOSE PYROPHOSPHATASE"/>
    <property type="match status" value="1"/>
</dbReference>
<dbReference type="PANTHER" id="PTHR43736:SF1">
    <property type="entry name" value="DIHYDRONEOPTERIN TRIPHOSPHATE DIPHOSPHATASE"/>
    <property type="match status" value="1"/>
</dbReference>
<dbReference type="Pfam" id="PF00293">
    <property type="entry name" value="NUDIX"/>
    <property type="match status" value="1"/>
</dbReference>
<dbReference type="PRINTS" id="PR00502">
    <property type="entry name" value="NUDIXFAMILY"/>
</dbReference>
<dbReference type="SUPFAM" id="SSF55811">
    <property type="entry name" value="Nudix"/>
    <property type="match status" value="1"/>
</dbReference>
<dbReference type="PROSITE" id="PS51462">
    <property type="entry name" value="NUDIX"/>
    <property type="match status" value="1"/>
</dbReference>
<dbReference type="PROSITE" id="PS00893">
    <property type="entry name" value="NUDIX_BOX"/>
    <property type="match status" value="1"/>
</dbReference>